<organism>
    <name type="scientific">Chironomus thummi piger</name>
    <name type="common">Midge</name>
    <name type="synonym">Chironomus piger</name>
    <dbReference type="NCBI Taxonomy" id="7156"/>
    <lineage>
        <taxon>Eukaryota</taxon>
        <taxon>Metazoa</taxon>
        <taxon>Ecdysozoa</taxon>
        <taxon>Arthropoda</taxon>
        <taxon>Hexapoda</taxon>
        <taxon>Insecta</taxon>
        <taxon>Pterygota</taxon>
        <taxon>Neoptera</taxon>
        <taxon>Endopterygota</taxon>
        <taxon>Diptera</taxon>
        <taxon>Nematocera</taxon>
        <taxon>Chironomoidea</taxon>
        <taxon>Chironomidae</taxon>
        <taxon>Chironominae</taxon>
        <taxon>Chironomus</taxon>
    </lineage>
</organism>
<sequence length="159" mass="18000">MKFLVILTLCIAGAIAHCDKAPFIKASWNQVKHNEVDILYTVFKAYPEIQDRFPQFAGKDLEAIKETAEFAVHSTRIVSFMSEIVSLVGNPAVQSSIDLLLVKMANDHKARGVTKELFEKFNIAFMGYLKSHTTWDEKTENAWKVVGDEHHAIVYSILE</sequence>
<gene>
    <name type="primary">CTT-W</name>
</gene>
<name>GLBW_CHITP</name>
<comment type="miscellaneous">
    <text>There are at least 12 different components in Midge globin.</text>
</comment>
<comment type="similarity">
    <text evidence="1">Belongs to the globin family.</text>
</comment>
<reference key="1">
    <citation type="submission" date="1990-09" db="EMBL/GenBank/DDBJ databases">
        <authorList>
            <person name="Hankeln T."/>
            <person name="Rozynek P."/>
            <person name="Schmidt E.R."/>
            <person name="Broecker M."/>
        </authorList>
    </citation>
    <scope>NUCLEOTIDE SEQUENCE [GENOMIC DNA]</scope>
</reference>
<feature type="signal peptide">
    <location>
        <begin position="1"/>
        <end position="16"/>
    </location>
</feature>
<feature type="chain" id="PRO_0000011208" description="Globin CTT-W">
    <location>
        <begin position="17"/>
        <end position="159"/>
    </location>
</feature>
<feature type="domain" description="Globin" evidence="1">
    <location>
        <begin position="17"/>
        <end position="159"/>
    </location>
</feature>
<feature type="binding site" description="distal binding residue" evidence="1">
    <location>
        <position position="73"/>
    </location>
    <ligand>
        <name>heme b</name>
        <dbReference type="ChEBI" id="CHEBI:60344"/>
    </ligand>
    <ligandPart>
        <name>Fe</name>
        <dbReference type="ChEBI" id="CHEBI:18248"/>
    </ligandPart>
</feature>
<feature type="binding site" description="proximal binding residue" evidence="1">
    <location>
        <position position="108"/>
    </location>
    <ligand>
        <name>heme b</name>
        <dbReference type="ChEBI" id="CHEBI:60344"/>
    </ligand>
    <ligandPart>
        <name>Fe</name>
        <dbReference type="ChEBI" id="CHEBI:18248"/>
    </ligandPart>
</feature>
<proteinExistence type="inferred from homology"/>
<accession>P29244</accession>
<protein>
    <recommendedName>
        <fullName>Globin CTT-W</fullName>
    </recommendedName>
    <alternativeName>
        <fullName>HBW</fullName>
    </alternativeName>
</protein>
<keyword id="KW-0349">Heme</keyword>
<keyword id="KW-0408">Iron</keyword>
<keyword id="KW-0479">Metal-binding</keyword>
<keyword id="KW-0561">Oxygen transport</keyword>
<keyword id="KW-0732">Signal</keyword>
<keyword id="KW-0813">Transport</keyword>
<evidence type="ECO:0000255" key="1">
    <source>
        <dbReference type="PROSITE-ProRule" id="PRU00238"/>
    </source>
</evidence>
<dbReference type="EMBL" id="X56271">
    <property type="protein sequence ID" value="CAA39719.1"/>
    <property type="molecule type" value="Genomic_DNA"/>
</dbReference>
<dbReference type="PIR" id="S21634">
    <property type="entry name" value="S21634"/>
</dbReference>
<dbReference type="SMR" id="P29244"/>
<dbReference type="GO" id="GO:0005576">
    <property type="term" value="C:extracellular region"/>
    <property type="evidence" value="ECO:0007669"/>
    <property type="project" value="InterPro"/>
</dbReference>
<dbReference type="GO" id="GO:0005833">
    <property type="term" value="C:hemoglobin complex"/>
    <property type="evidence" value="ECO:0007669"/>
    <property type="project" value="InterPro"/>
</dbReference>
<dbReference type="GO" id="GO:0020037">
    <property type="term" value="F:heme binding"/>
    <property type="evidence" value="ECO:0007669"/>
    <property type="project" value="InterPro"/>
</dbReference>
<dbReference type="GO" id="GO:0046872">
    <property type="term" value="F:metal ion binding"/>
    <property type="evidence" value="ECO:0007669"/>
    <property type="project" value="UniProtKB-KW"/>
</dbReference>
<dbReference type="GO" id="GO:0019825">
    <property type="term" value="F:oxygen binding"/>
    <property type="evidence" value="ECO:0007669"/>
    <property type="project" value="InterPro"/>
</dbReference>
<dbReference type="GO" id="GO:0005344">
    <property type="term" value="F:oxygen carrier activity"/>
    <property type="evidence" value="ECO:0007669"/>
    <property type="project" value="UniProtKB-KW"/>
</dbReference>
<dbReference type="CDD" id="cd01040">
    <property type="entry name" value="Mb-like"/>
    <property type="match status" value="1"/>
</dbReference>
<dbReference type="Gene3D" id="1.10.490.10">
    <property type="entry name" value="Globins"/>
    <property type="match status" value="1"/>
</dbReference>
<dbReference type="InterPro" id="IPR002336">
    <property type="entry name" value="Erythrocruorin"/>
</dbReference>
<dbReference type="InterPro" id="IPR000971">
    <property type="entry name" value="Globin"/>
</dbReference>
<dbReference type="InterPro" id="IPR009050">
    <property type="entry name" value="Globin-like_sf"/>
</dbReference>
<dbReference type="InterPro" id="IPR012292">
    <property type="entry name" value="Globin/Proto"/>
</dbReference>
<dbReference type="InterPro" id="IPR044399">
    <property type="entry name" value="Mb-like_M"/>
</dbReference>
<dbReference type="PANTHER" id="PTHR47217">
    <property type="entry name" value="GLOBIN-LIKE PROTEIN"/>
    <property type="match status" value="1"/>
</dbReference>
<dbReference type="PANTHER" id="PTHR47217:SF1">
    <property type="entry name" value="GLOBIN-LIKE PROTEIN"/>
    <property type="match status" value="1"/>
</dbReference>
<dbReference type="Pfam" id="PF00042">
    <property type="entry name" value="Globin"/>
    <property type="match status" value="1"/>
</dbReference>
<dbReference type="PRINTS" id="PR00611">
    <property type="entry name" value="ERYTHCRUORIN"/>
</dbReference>
<dbReference type="SUPFAM" id="SSF46458">
    <property type="entry name" value="Globin-like"/>
    <property type="match status" value="1"/>
</dbReference>
<dbReference type="PROSITE" id="PS01033">
    <property type="entry name" value="GLOBIN"/>
    <property type="match status" value="1"/>
</dbReference>